<gene>
    <name type="primary">HOG1</name>
</gene>
<feature type="chain" id="PRO_0000289693" description="Mitogen-activated protein kinase HOG1">
    <location>
        <begin position="1"/>
        <end position="359"/>
    </location>
</feature>
<feature type="domain" description="Protein kinase" evidence="4">
    <location>
        <begin position="20"/>
        <end position="299"/>
    </location>
</feature>
<feature type="short sequence motif" description="TXY">
    <location>
        <begin position="171"/>
        <end position="173"/>
    </location>
</feature>
<feature type="active site" description="Proton acceptor" evidence="4 5">
    <location>
        <position position="141"/>
    </location>
</feature>
<feature type="binding site" evidence="4">
    <location>
        <begin position="26"/>
        <end position="34"/>
    </location>
    <ligand>
        <name>ATP</name>
        <dbReference type="ChEBI" id="CHEBI:30616"/>
    </ligand>
</feature>
<feature type="binding site" evidence="4">
    <location>
        <position position="49"/>
    </location>
    <ligand>
        <name>ATP</name>
        <dbReference type="ChEBI" id="CHEBI:30616"/>
    </ligand>
</feature>
<feature type="modified residue" description="Phosphothreonine" evidence="1">
    <location>
        <position position="171"/>
    </location>
</feature>
<feature type="modified residue" description="Phosphotyrosine" evidence="1">
    <location>
        <position position="173"/>
    </location>
</feature>
<organism>
    <name type="scientific">Hortaea werneckii</name>
    <dbReference type="NCBI Taxonomy" id="91943"/>
    <lineage>
        <taxon>Eukaryota</taxon>
        <taxon>Fungi</taxon>
        <taxon>Dikarya</taxon>
        <taxon>Ascomycota</taxon>
        <taxon>Pezizomycotina</taxon>
        <taxon>Dothideomycetes</taxon>
        <taxon>Dothideomycetidae</taxon>
        <taxon>Mycosphaerellales</taxon>
        <taxon>Teratosphaeriaceae</taxon>
        <taxon>Hortaea</taxon>
    </lineage>
</organism>
<reference key="1">
    <citation type="journal article" date="2002" name="FEMS Microbiol. Lett.">
        <title>The HOG pathway in the halophilic black yeast Hortaea werneckii: isolation of the HOG1 homolog gene and activation of HwHog1p.</title>
        <authorList>
            <person name="Turk M."/>
            <person name="Plemenitas A."/>
        </authorList>
    </citation>
    <scope>NUCLEOTIDE SEQUENCE [GENOMIC DNA]</scope>
    <scope>FUNCTION</scope>
    <scope>SUBCELLULAR LOCATION</scope>
    <source>
        <strain>MZKI B-736 / CBS 100457</strain>
    </source>
</reference>
<reference key="2">
    <citation type="journal article" date="2007" name="Saline Syst.">
        <title>The MAP kinase HwHog1 from the halophilic black yeast Hortaea werneckii: coping with stresses in solar salterns.</title>
        <authorList>
            <person name="Lenassi M."/>
            <person name="Vaupotic T."/>
            <person name="Gunde-Cimerman N."/>
            <person name="Plemenitas A."/>
        </authorList>
    </citation>
    <scope>FUNCTION</scope>
</reference>
<keyword id="KW-0010">Activator</keyword>
<keyword id="KW-0067">ATP-binding</keyword>
<keyword id="KW-0963">Cytoplasm</keyword>
<keyword id="KW-0418">Kinase</keyword>
<keyword id="KW-0547">Nucleotide-binding</keyword>
<keyword id="KW-0539">Nucleus</keyword>
<keyword id="KW-0597">Phosphoprotein</keyword>
<keyword id="KW-0723">Serine/threonine-protein kinase</keyword>
<keyword id="KW-0804">Transcription</keyword>
<keyword id="KW-0805">Transcription regulation</keyword>
<keyword id="KW-0808">Transferase</keyword>
<proteinExistence type="inferred from homology"/>
<accession>Q8NJT7</accession>
<evidence type="ECO:0000250" key="1"/>
<evidence type="ECO:0000250" key="2">
    <source>
        <dbReference type="UniProtKB" id="P32485"/>
    </source>
</evidence>
<evidence type="ECO:0000250" key="3">
    <source>
        <dbReference type="UniProtKB" id="Q16539"/>
    </source>
</evidence>
<evidence type="ECO:0000255" key="4">
    <source>
        <dbReference type="PROSITE-ProRule" id="PRU00159"/>
    </source>
</evidence>
<evidence type="ECO:0000255" key="5">
    <source>
        <dbReference type="PROSITE-ProRule" id="PRU10027"/>
    </source>
</evidence>
<evidence type="ECO:0000269" key="6">
    <source>
    </source>
</evidence>
<evidence type="ECO:0000269" key="7">
    <source>
    </source>
</evidence>
<protein>
    <recommendedName>
        <fullName>Mitogen-activated protein kinase HOG1</fullName>
        <shortName>MAP kinase HOG1</shortName>
        <ecNumber evidence="2">2.7.11.24</ecNumber>
    </recommendedName>
    <alternativeName>
        <fullName>HwHog1</fullName>
    </alternativeName>
</protein>
<dbReference type="EC" id="2.7.11.24" evidence="2"/>
<dbReference type="EMBL" id="AF516914">
    <property type="protein sequence ID" value="AAM64214.1"/>
    <property type="molecule type" value="Genomic_DNA"/>
</dbReference>
<dbReference type="SMR" id="Q8NJT7"/>
<dbReference type="VEuPathDB" id="FungiDB:BTJ68_15028"/>
<dbReference type="PhylomeDB" id="Q8NJT7"/>
<dbReference type="GO" id="GO:0005737">
    <property type="term" value="C:cytoplasm"/>
    <property type="evidence" value="ECO:0007669"/>
    <property type="project" value="UniProtKB-SubCell"/>
</dbReference>
<dbReference type="GO" id="GO:0005634">
    <property type="term" value="C:nucleus"/>
    <property type="evidence" value="ECO:0007669"/>
    <property type="project" value="UniProtKB-SubCell"/>
</dbReference>
<dbReference type="GO" id="GO:0005524">
    <property type="term" value="F:ATP binding"/>
    <property type="evidence" value="ECO:0007669"/>
    <property type="project" value="UniProtKB-KW"/>
</dbReference>
<dbReference type="GO" id="GO:0004707">
    <property type="term" value="F:MAP kinase activity"/>
    <property type="evidence" value="ECO:0007669"/>
    <property type="project" value="UniProtKB-EC"/>
</dbReference>
<dbReference type="GO" id="GO:0106310">
    <property type="term" value="F:protein serine kinase activity"/>
    <property type="evidence" value="ECO:0007669"/>
    <property type="project" value="RHEA"/>
</dbReference>
<dbReference type="GO" id="GO:0051403">
    <property type="term" value="P:stress-activated MAPK cascade"/>
    <property type="evidence" value="ECO:0007669"/>
    <property type="project" value="InterPro"/>
</dbReference>
<dbReference type="CDD" id="cd07856">
    <property type="entry name" value="STKc_Sty1_Hog1"/>
    <property type="match status" value="1"/>
</dbReference>
<dbReference type="FunFam" id="1.10.510.10:FF:000049">
    <property type="entry name" value="Mitogen-activated protein kinase"/>
    <property type="match status" value="1"/>
</dbReference>
<dbReference type="FunFam" id="3.30.200.20:FF:000050">
    <property type="entry name" value="Mitogen-activated protein kinase"/>
    <property type="match status" value="1"/>
</dbReference>
<dbReference type="Gene3D" id="3.30.200.20">
    <property type="entry name" value="Phosphorylase Kinase, domain 1"/>
    <property type="match status" value="1"/>
</dbReference>
<dbReference type="Gene3D" id="1.10.510.10">
    <property type="entry name" value="Transferase(Phosphotransferase) domain 1"/>
    <property type="match status" value="1"/>
</dbReference>
<dbReference type="InterPro" id="IPR011009">
    <property type="entry name" value="Kinase-like_dom_sf"/>
</dbReference>
<dbReference type="InterPro" id="IPR050117">
    <property type="entry name" value="MAP_kinase"/>
</dbReference>
<dbReference type="InterPro" id="IPR003527">
    <property type="entry name" value="MAP_kinase_CS"/>
</dbReference>
<dbReference type="InterPro" id="IPR008352">
    <property type="entry name" value="MAPK_p38-like"/>
</dbReference>
<dbReference type="InterPro" id="IPR038783">
    <property type="entry name" value="MAPK_Sty1/Hog1"/>
</dbReference>
<dbReference type="InterPro" id="IPR000719">
    <property type="entry name" value="Prot_kinase_dom"/>
</dbReference>
<dbReference type="InterPro" id="IPR017441">
    <property type="entry name" value="Protein_kinase_ATP_BS"/>
</dbReference>
<dbReference type="InterPro" id="IPR008271">
    <property type="entry name" value="Ser/Thr_kinase_AS"/>
</dbReference>
<dbReference type="PANTHER" id="PTHR24055">
    <property type="entry name" value="MITOGEN-ACTIVATED PROTEIN KINASE"/>
    <property type="match status" value="1"/>
</dbReference>
<dbReference type="Pfam" id="PF00069">
    <property type="entry name" value="Pkinase"/>
    <property type="match status" value="1"/>
</dbReference>
<dbReference type="PRINTS" id="PR01773">
    <property type="entry name" value="P38MAPKINASE"/>
</dbReference>
<dbReference type="SMART" id="SM00220">
    <property type="entry name" value="S_TKc"/>
    <property type="match status" value="1"/>
</dbReference>
<dbReference type="SUPFAM" id="SSF56112">
    <property type="entry name" value="Protein kinase-like (PK-like)"/>
    <property type="match status" value="1"/>
</dbReference>
<dbReference type="PROSITE" id="PS01351">
    <property type="entry name" value="MAPK"/>
    <property type="match status" value="1"/>
</dbReference>
<dbReference type="PROSITE" id="PS00107">
    <property type="entry name" value="PROTEIN_KINASE_ATP"/>
    <property type="match status" value="1"/>
</dbReference>
<dbReference type="PROSITE" id="PS50011">
    <property type="entry name" value="PROTEIN_KINASE_DOM"/>
    <property type="match status" value="1"/>
</dbReference>
<dbReference type="PROSITE" id="PS00108">
    <property type="entry name" value="PROTEIN_KINASE_ST"/>
    <property type="match status" value="1"/>
</dbReference>
<name>HOG1_HORWE</name>
<sequence>MAEFVRAQIFGTTFEITSRYTDLQPVGMGAFGLVCSAKDQLTSQAVAVKKIMKPFSTPVLSKRTYRELKLLKHLRHENIICLSDIFISPLEDMYVVTELLGTDLHRLLTSRPLEKQFIQYFLYQILRGLKYVHSAGVVHRDLKPSNILINENCDLKICDFGLARIQDPQMTGYVSTRYYRAPEIMLTWQKYDVEVDIWSAGCIFAEMLEGKPLFPGKDHVNQFSIITELLGTPPDDVIATICSENTLRFVQSLPKRERQPLKNKFKNADPQAIELLERMLVFDPRKRVKAGEALADPYLAPYHDPTDEPEAQEKFDWSFNDADLPVDTWKIMMYSEILDFHNVDANAEQAAHNNDTVAG</sequence>
<comment type="function">
    <text evidence="6 7">Proline-directed serine/threonine-protein kinase involved in a signal transduction pathway that is activated by changes in the osmolarity of the extracellular environment. Controls osmotic regulation of transcription of target genes.</text>
</comment>
<comment type="catalytic activity">
    <reaction evidence="2">
        <text>L-seryl-[protein] + ATP = O-phospho-L-seryl-[protein] + ADP + H(+)</text>
        <dbReference type="Rhea" id="RHEA:17989"/>
        <dbReference type="Rhea" id="RHEA-COMP:9863"/>
        <dbReference type="Rhea" id="RHEA-COMP:11604"/>
        <dbReference type="ChEBI" id="CHEBI:15378"/>
        <dbReference type="ChEBI" id="CHEBI:29999"/>
        <dbReference type="ChEBI" id="CHEBI:30616"/>
        <dbReference type="ChEBI" id="CHEBI:83421"/>
        <dbReference type="ChEBI" id="CHEBI:456216"/>
        <dbReference type="EC" id="2.7.11.24"/>
    </reaction>
    <physiologicalReaction direction="left-to-right" evidence="2">
        <dbReference type="Rhea" id="RHEA:17990"/>
    </physiologicalReaction>
</comment>
<comment type="catalytic activity">
    <reaction evidence="2">
        <text>L-threonyl-[protein] + ATP = O-phospho-L-threonyl-[protein] + ADP + H(+)</text>
        <dbReference type="Rhea" id="RHEA:46608"/>
        <dbReference type="Rhea" id="RHEA-COMP:11060"/>
        <dbReference type="Rhea" id="RHEA-COMP:11605"/>
        <dbReference type="ChEBI" id="CHEBI:15378"/>
        <dbReference type="ChEBI" id="CHEBI:30013"/>
        <dbReference type="ChEBI" id="CHEBI:30616"/>
        <dbReference type="ChEBI" id="CHEBI:61977"/>
        <dbReference type="ChEBI" id="CHEBI:456216"/>
        <dbReference type="EC" id="2.7.11.24"/>
    </reaction>
    <physiologicalReaction direction="left-to-right" evidence="2">
        <dbReference type="Rhea" id="RHEA:46609"/>
    </physiologicalReaction>
</comment>
<comment type="cofactor">
    <cofactor evidence="3">
        <name>Mg(2+)</name>
        <dbReference type="ChEBI" id="CHEBI:18420"/>
    </cofactor>
</comment>
<comment type="activity regulation">
    <text evidence="1">Activated by tyrosine and threonine phosphorylation.</text>
</comment>
<comment type="subcellular location">
    <subcellularLocation>
        <location evidence="6">Cytoplasm</location>
    </subcellularLocation>
    <subcellularLocation>
        <location evidence="6">Nucleus</location>
    </subcellularLocation>
    <text>Predominantly cytoplasmic in unstressed cells but rapidly concentrates within the nucleus in response to hyperosmotic conditions and phosphorylation.</text>
</comment>
<comment type="domain">
    <text>The TXY motif contains the threonine and tyrosine residues whose phosphorylation activates the MAP kinases.</text>
</comment>
<comment type="PTM">
    <text evidence="1">Dually phosphorylated on Thr-171 and Tyr-173, which activates the enzyme.</text>
</comment>
<comment type="similarity">
    <text evidence="4">Belongs to the protein kinase superfamily. Ser/Thr protein kinase family. MAP kinase subfamily. HOG1 sub-subfamily.</text>
</comment>